<reference key="1">
    <citation type="submission" date="2009-01" db="EMBL/GenBank/DDBJ databases">
        <authorList>
            <person name="Qin X."/>
            <person name="Bachman B."/>
            <person name="Battles P."/>
            <person name="Bell A."/>
            <person name="Bess C."/>
            <person name="Bickham C."/>
            <person name="Chaboub L."/>
            <person name="Chen D."/>
            <person name="Coyle M."/>
            <person name="Deiros D.R."/>
            <person name="Dinh H."/>
            <person name="Forbes L."/>
            <person name="Fowler G."/>
            <person name="Francisco L."/>
            <person name="Fu Q."/>
            <person name="Gubbala S."/>
            <person name="Hale W."/>
            <person name="Han Y."/>
            <person name="Hemphill L."/>
            <person name="Highlander S.K."/>
            <person name="Hirani K."/>
            <person name="Hogues M."/>
            <person name="Jackson L."/>
            <person name="Jakkamsetti A."/>
            <person name="Javaid M."/>
            <person name="Jiang H."/>
            <person name="Korchina V."/>
            <person name="Kovar C."/>
            <person name="Lara F."/>
            <person name="Lee S."/>
            <person name="Mata R."/>
            <person name="Mathew T."/>
            <person name="Moen C."/>
            <person name="Morales K."/>
            <person name="Munidasa M."/>
            <person name="Nazareth L."/>
            <person name="Ngo R."/>
            <person name="Nguyen L."/>
            <person name="Okwuonu G."/>
            <person name="Ongeri F."/>
            <person name="Patil S."/>
            <person name="Petrosino J."/>
            <person name="Pham C."/>
            <person name="Pham P."/>
            <person name="Pu L.-L."/>
            <person name="Puazo M."/>
            <person name="Raj R."/>
            <person name="Reid J."/>
            <person name="Rouhana J."/>
            <person name="Saada N."/>
            <person name="Shang Y."/>
            <person name="Simmons D."/>
            <person name="Thornton R."/>
            <person name="Warren J."/>
            <person name="Weissenberger G."/>
            <person name="Zhang J."/>
            <person name="Zhang L."/>
            <person name="Zhou C."/>
            <person name="Zhu D."/>
            <person name="Muzny D."/>
            <person name="Worley K."/>
            <person name="Gibbs R."/>
        </authorList>
    </citation>
    <scope>NUCLEOTIDE SEQUENCE [LARGE SCALE GENOMIC DNA]</scope>
    <source>
        <strain>LMS2-1</strain>
    </source>
</reference>
<reference key="2">
    <citation type="journal article" date="2021" name="PLoS Comput. Biol.">
        <title>Experimental and computational investigation of enzyme functional annotations uncovers misannotation in the EC 1.1.3.15 enzyme class.</title>
        <authorList>
            <person name="Rembeza E."/>
            <person name="Engqvist M.K.M."/>
        </authorList>
    </citation>
    <scope>FUNCTION</scope>
    <scope>CATALYTIC ACTIVITY</scope>
</reference>
<proteinExistence type="evidence at protein level"/>
<protein>
    <recommendedName>
        <fullName evidence="5">L-lactate oxidase</fullName>
        <shortName evidence="5">LOX</shortName>
        <ecNumber evidence="4">1.1.3.-</ecNumber>
    </recommendedName>
</protein>
<accession>C2K1F0</accession>
<dbReference type="EC" id="1.1.3.-" evidence="4"/>
<dbReference type="EMBL" id="ACIZ01000119">
    <property type="protein sequence ID" value="EEN78872.1"/>
    <property type="molecule type" value="Genomic_DNA"/>
</dbReference>
<dbReference type="RefSeq" id="WP_005691899.1">
    <property type="nucleotide sequence ID" value="NZ_GG692962.1"/>
</dbReference>
<dbReference type="SMR" id="C2K1F0"/>
<dbReference type="HOGENOM" id="CLU_020639_0_0_9"/>
<dbReference type="Proteomes" id="UP000004525">
    <property type="component" value="Unassembled WGS sequence"/>
</dbReference>
<dbReference type="GO" id="GO:0003973">
    <property type="term" value="F:(S)-2-hydroxy-acid oxidase activity"/>
    <property type="evidence" value="ECO:0007669"/>
    <property type="project" value="UniProtKB-EC"/>
</dbReference>
<dbReference type="GO" id="GO:0010181">
    <property type="term" value="F:FMN binding"/>
    <property type="evidence" value="ECO:0007669"/>
    <property type="project" value="InterPro"/>
</dbReference>
<dbReference type="Gene3D" id="3.20.20.70">
    <property type="entry name" value="Aldolase class I"/>
    <property type="match status" value="1"/>
</dbReference>
<dbReference type="InterPro" id="IPR013785">
    <property type="entry name" value="Aldolase_TIM"/>
</dbReference>
<dbReference type="InterPro" id="IPR012133">
    <property type="entry name" value="Alpha-hydoxy_acid_DH_FMN"/>
</dbReference>
<dbReference type="InterPro" id="IPR000262">
    <property type="entry name" value="FMN-dep_DH"/>
</dbReference>
<dbReference type="InterPro" id="IPR037396">
    <property type="entry name" value="FMN_HAD"/>
</dbReference>
<dbReference type="InterPro" id="IPR008259">
    <property type="entry name" value="FMN_hydac_DH_AS"/>
</dbReference>
<dbReference type="PANTHER" id="PTHR10578:SF107">
    <property type="entry name" value="2-HYDROXYACID OXIDASE 1"/>
    <property type="match status" value="1"/>
</dbReference>
<dbReference type="PANTHER" id="PTHR10578">
    <property type="entry name" value="S -2-HYDROXY-ACID OXIDASE-RELATED"/>
    <property type="match status" value="1"/>
</dbReference>
<dbReference type="Pfam" id="PF01070">
    <property type="entry name" value="FMN_dh"/>
    <property type="match status" value="1"/>
</dbReference>
<dbReference type="PIRSF" id="PIRSF000138">
    <property type="entry name" value="Al-hdrx_acd_dh"/>
    <property type="match status" value="1"/>
</dbReference>
<dbReference type="SUPFAM" id="SSF51395">
    <property type="entry name" value="FMN-linked oxidoreductases"/>
    <property type="match status" value="1"/>
</dbReference>
<dbReference type="PROSITE" id="PS00557">
    <property type="entry name" value="FMN_HYDROXY_ACID_DH_1"/>
    <property type="match status" value="1"/>
</dbReference>
<dbReference type="PROSITE" id="PS51349">
    <property type="entry name" value="FMN_HYDROXY_ACID_DH_2"/>
    <property type="match status" value="1"/>
</dbReference>
<evidence type="ECO:0000250" key="1">
    <source>
        <dbReference type="UniProtKB" id="O33655"/>
    </source>
</evidence>
<evidence type="ECO:0000250" key="2">
    <source>
        <dbReference type="UniProtKB" id="Q44467"/>
    </source>
</evidence>
<evidence type="ECO:0000255" key="3">
    <source>
        <dbReference type="PROSITE-ProRule" id="PRU00683"/>
    </source>
</evidence>
<evidence type="ECO:0000269" key="4">
    <source>
    </source>
</evidence>
<evidence type="ECO:0000305" key="5"/>
<evidence type="ECO:0000312" key="6">
    <source>
        <dbReference type="EMBL" id="EEN78872.1"/>
    </source>
</evidence>
<feature type="chain" id="PRO_0000454872" description="L-lactate oxidase">
    <location>
        <begin position="1"/>
        <end position="368"/>
    </location>
</feature>
<feature type="domain" description="FMN hydroxy acid dehydrogenase" evidence="3">
    <location>
        <begin position="13"/>
        <end position="368"/>
    </location>
</feature>
<feature type="active site" description="Proton acceptor" evidence="2">
    <location>
        <position position="263"/>
    </location>
</feature>
<feature type="binding site" evidence="2">
    <location>
        <position position="39"/>
    </location>
    <ligand>
        <name>pyruvate</name>
        <dbReference type="ChEBI" id="CHEBI:15361"/>
    </ligand>
</feature>
<feature type="binding site" evidence="2">
    <location>
        <begin position="92"/>
        <end position="94"/>
    </location>
    <ligand>
        <name>FMN</name>
        <dbReference type="ChEBI" id="CHEBI:58210"/>
    </ligand>
</feature>
<feature type="binding site" evidence="2">
    <location>
        <position position="121"/>
    </location>
    <ligand>
        <name>FMN</name>
        <dbReference type="ChEBI" id="CHEBI:58210"/>
    </ligand>
</feature>
<feature type="binding site" evidence="2">
    <location>
        <position position="143"/>
    </location>
    <ligand>
        <name>FMN</name>
        <dbReference type="ChEBI" id="CHEBI:58210"/>
    </ligand>
</feature>
<feature type="binding site" evidence="2">
    <location>
        <position position="145"/>
    </location>
    <ligand>
        <name>pyruvate</name>
        <dbReference type="ChEBI" id="CHEBI:15361"/>
    </ligand>
</feature>
<feature type="binding site" evidence="2">
    <location>
        <position position="171"/>
    </location>
    <ligand>
        <name>FMN</name>
        <dbReference type="ChEBI" id="CHEBI:58210"/>
    </ligand>
</feature>
<feature type="binding site" evidence="2">
    <location>
        <position position="180"/>
    </location>
    <ligand>
        <name>pyruvate</name>
        <dbReference type="ChEBI" id="CHEBI:15361"/>
    </ligand>
</feature>
<feature type="binding site" evidence="2">
    <location>
        <position position="239"/>
    </location>
    <ligand>
        <name>FMN</name>
        <dbReference type="ChEBI" id="CHEBI:58210"/>
    </ligand>
</feature>
<feature type="binding site" evidence="2">
    <location>
        <position position="261"/>
    </location>
    <ligand>
        <name>FMN</name>
        <dbReference type="ChEBI" id="CHEBI:58210"/>
    </ligand>
</feature>
<feature type="binding site" evidence="2">
    <location>
        <position position="263"/>
    </location>
    <ligand>
        <name>pyruvate</name>
        <dbReference type="ChEBI" id="CHEBI:15361"/>
    </ligand>
</feature>
<feature type="binding site" evidence="2">
    <location>
        <position position="266"/>
    </location>
    <ligand>
        <name>pyruvate</name>
        <dbReference type="ChEBI" id="CHEBI:15361"/>
    </ligand>
</feature>
<feature type="binding site" evidence="2">
    <location>
        <begin position="294"/>
        <end position="298"/>
    </location>
    <ligand>
        <name>FMN</name>
        <dbReference type="ChEBI" id="CHEBI:58210"/>
    </ligand>
</feature>
<feature type="binding site" evidence="2">
    <location>
        <position position="318"/>
    </location>
    <ligand>
        <name>FMN</name>
        <dbReference type="ChEBI" id="CHEBI:58210"/>
    </ligand>
</feature>
<keyword id="KW-0285">Flavoprotein</keyword>
<keyword id="KW-0288">FMN</keyword>
<keyword id="KW-0560">Oxidoreductase</keyword>
<comment type="function">
    <text evidence="1 4">Catalyzes the oxidation of (S)-lactate (L-lactate) to pyruvate, with a reduction of O2 to H2O2. To a lesser extent is also able to use 2-hydroxyoctanoate as substrate (PubMed:34555022). May be involved in the utilization of L-lactate as an energy source for growth (By similarity).</text>
</comment>
<comment type="catalytic activity">
    <reaction evidence="4">
        <text>(S)-lactate + O2 = pyruvate + H2O2</text>
        <dbReference type="Rhea" id="RHEA:55868"/>
        <dbReference type="ChEBI" id="CHEBI:15361"/>
        <dbReference type="ChEBI" id="CHEBI:15379"/>
        <dbReference type="ChEBI" id="CHEBI:16240"/>
        <dbReference type="ChEBI" id="CHEBI:16651"/>
    </reaction>
    <physiologicalReaction direction="left-to-right" evidence="5">
        <dbReference type="Rhea" id="RHEA:55869"/>
    </physiologicalReaction>
</comment>
<comment type="catalytic activity">
    <reaction evidence="4">
        <text>2-hydroxyoctanoate + O2 = 2-oxooctanoate + H2O2</text>
        <dbReference type="Rhea" id="RHEA:67940"/>
        <dbReference type="ChEBI" id="CHEBI:15379"/>
        <dbReference type="ChEBI" id="CHEBI:16240"/>
        <dbReference type="ChEBI" id="CHEBI:133514"/>
        <dbReference type="ChEBI" id="CHEBI:176689"/>
    </reaction>
</comment>
<comment type="cofactor">
    <cofactor evidence="2">
        <name>FMN</name>
        <dbReference type="ChEBI" id="CHEBI:58210"/>
    </cofactor>
    <text evidence="2">Binds 1 FMN per subunit.</text>
</comment>
<comment type="subunit">
    <text evidence="2">Homotetramer.</text>
</comment>
<comment type="similarity">
    <text evidence="5">Belongs to the FMN-dependent alpha-hydroxy acid dehydrogenase family.</text>
</comment>
<name>LOX_LACRM</name>
<gene>
    <name evidence="6" type="ORF">HMPREF0539_2985</name>
</gene>
<organism>
    <name type="scientific">Lacticaseibacillus rhamnosus (strain LMS2-1)</name>
    <dbReference type="NCBI Taxonomy" id="525361"/>
    <lineage>
        <taxon>Bacteria</taxon>
        <taxon>Bacillati</taxon>
        <taxon>Bacillota</taxon>
        <taxon>Bacilli</taxon>
        <taxon>Lactobacillales</taxon>
        <taxon>Lactobacillaceae</taxon>
        <taxon>Lacticaseibacillus</taxon>
    </lineage>
</organism>
<sequence length="368" mass="38777">MVDAVKADPFGKVNAIDVLDLASLEARAEKVLGRGEFGYISEGSDDGYTMHRNTTAFQDVHMLPRVLQGVENPDQSTTFMGAKLASPLLTAPIASNTLAHPSGELGLAKGAKEAGIMMSQSTFASKTIAETAAVSDGAPYMFQLYMPKDWEYCQYLLDEAKQAGALAIILTADSTLGGYREKDVMNHYHLKGRLANLEGYNTGQSGVGAGGLFKESMQKLDLGLISKLASYSGLPIIIKGIQHPADAVAAITAGAAGIYVSNHGGRQLDGAPGAIEQLPAIAAAVDHRVPIIFDGGVQRGTHVLKALALGADLVGIGRPFSYGLALGGWQGVKDVADHLKMEINIAMQLTGCQTMADVKQMKVKTTFA</sequence>